<comment type="function">
    <text evidence="1">Part of the phosphoribosylformylglycinamidine synthase complex involved in the purines biosynthetic pathway. Catalyzes the ATP-dependent conversion of formylglycinamide ribonucleotide (FGAR) and glutamine to yield formylglycinamidine ribonucleotide (FGAM) and glutamate. The FGAM synthase complex is composed of three subunits. PurQ produces an ammonia molecule by converting glutamine to glutamate. PurL transfers the ammonia molecule to FGAR to form FGAM in an ATP-dependent manner. PurS interacts with PurQ and PurL and is thought to assist in the transfer of the ammonia molecule from PurQ to PurL.</text>
</comment>
<comment type="catalytic activity">
    <reaction evidence="1">
        <text>N(2)-formyl-N(1)-(5-phospho-beta-D-ribosyl)glycinamide + L-glutamine + ATP + H2O = 2-formamido-N(1)-(5-O-phospho-beta-D-ribosyl)acetamidine + L-glutamate + ADP + phosphate + H(+)</text>
        <dbReference type="Rhea" id="RHEA:17129"/>
        <dbReference type="ChEBI" id="CHEBI:15377"/>
        <dbReference type="ChEBI" id="CHEBI:15378"/>
        <dbReference type="ChEBI" id="CHEBI:29985"/>
        <dbReference type="ChEBI" id="CHEBI:30616"/>
        <dbReference type="ChEBI" id="CHEBI:43474"/>
        <dbReference type="ChEBI" id="CHEBI:58359"/>
        <dbReference type="ChEBI" id="CHEBI:147286"/>
        <dbReference type="ChEBI" id="CHEBI:147287"/>
        <dbReference type="ChEBI" id="CHEBI:456216"/>
        <dbReference type="EC" id="6.3.5.3"/>
    </reaction>
</comment>
<comment type="catalytic activity">
    <reaction evidence="1">
        <text>L-glutamine + H2O = L-glutamate + NH4(+)</text>
        <dbReference type="Rhea" id="RHEA:15889"/>
        <dbReference type="ChEBI" id="CHEBI:15377"/>
        <dbReference type="ChEBI" id="CHEBI:28938"/>
        <dbReference type="ChEBI" id="CHEBI:29985"/>
        <dbReference type="ChEBI" id="CHEBI:58359"/>
        <dbReference type="EC" id="3.5.1.2"/>
    </reaction>
</comment>
<comment type="pathway">
    <text evidence="1">Purine metabolism; IMP biosynthesis via de novo pathway; 5-amino-1-(5-phospho-D-ribosyl)imidazole from N(2)-formyl-N(1)-(5-phospho-D-ribosyl)glycinamide: step 1/2.</text>
</comment>
<comment type="subunit">
    <text evidence="1">Part of the FGAM synthase complex composed of 1 PurL, 1 PurQ and 2 PurS subunits.</text>
</comment>
<comment type="subcellular location">
    <subcellularLocation>
        <location evidence="1">Cytoplasm</location>
    </subcellularLocation>
</comment>
<name>PURQ_BRUAB</name>
<evidence type="ECO:0000255" key="1">
    <source>
        <dbReference type="HAMAP-Rule" id="MF_00421"/>
    </source>
</evidence>
<feature type="chain" id="PRO_0000100543" description="Phosphoribosylformylglycinamidine synthase subunit PurQ">
    <location>
        <begin position="1"/>
        <end position="223"/>
    </location>
</feature>
<feature type="domain" description="Glutamine amidotransferase type-1" evidence="1">
    <location>
        <begin position="3"/>
        <end position="223"/>
    </location>
</feature>
<feature type="active site" description="Nucleophile" evidence="1">
    <location>
        <position position="87"/>
    </location>
</feature>
<feature type="active site" evidence="1">
    <location>
        <position position="197"/>
    </location>
</feature>
<feature type="active site" evidence="1">
    <location>
        <position position="199"/>
    </location>
</feature>
<accession>Q57DR5</accession>
<reference key="1">
    <citation type="journal article" date="2005" name="J. Bacteriol.">
        <title>Completion of the genome sequence of Brucella abortus and comparison to the highly similar genomes of Brucella melitensis and Brucella suis.</title>
        <authorList>
            <person name="Halling S.M."/>
            <person name="Peterson-Burch B.D."/>
            <person name="Bricker B.J."/>
            <person name="Zuerner R.L."/>
            <person name="Qing Z."/>
            <person name="Li L.-L."/>
            <person name="Kapur V."/>
            <person name="Alt D.P."/>
            <person name="Olsen S.C."/>
        </authorList>
    </citation>
    <scope>NUCLEOTIDE SEQUENCE [LARGE SCALE GENOMIC DNA]</scope>
    <source>
        <strain>9-941</strain>
    </source>
</reference>
<protein>
    <recommendedName>
        <fullName evidence="1">Phosphoribosylformylglycinamidine synthase subunit PurQ</fullName>
        <shortName evidence="1">FGAM synthase</shortName>
        <ecNumber evidence="1">6.3.5.3</ecNumber>
    </recommendedName>
    <alternativeName>
        <fullName evidence="1">Formylglycinamide ribonucleotide amidotransferase subunit I</fullName>
        <shortName evidence="1">FGAR amidotransferase I</shortName>
        <shortName evidence="1">FGAR-AT I</shortName>
    </alternativeName>
    <alternativeName>
        <fullName evidence="1">Glutaminase PurQ</fullName>
        <ecNumber evidence="1">3.5.1.2</ecNumber>
    </alternativeName>
    <alternativeName>
        <fullName evidence="1">Phosphoribosylformylglycinamidine synthase subunit I</fullName>
    </alternativeName>
</protein>
<keyword id="KW-0067">ATP-binding</keyword>
<keyword id="KW-0963">Cytoplasm</keyword>
<keyword id="KW-0315">Glutamine amidotransferase</keyword>
<keyword id="KW-0378">Hydrolase</keyword>
<keyword id="KW-0436">Ligase</keyword>
<keyword id="KW-0547">Nucleotide-binding</keyword>
<keyword id="KW-0658">Purine biosynthesis</keyword>
<dbReference type="EC" id="6.3.5.3" evidence="1"/>
<dbReference type="EC" id="3.5.1.2" evidence="1"/>
<dbReference type="EMBL" id="AE017223">
    <property type="protein sequence ID" value="AAX74219.1"/>
    <property type="molecule type" value="Genomic_DNA"/>
</dbReference>
<dbReference type="RefSeq" id="WP_002963972.1">
    <property type="nucleotide sequence ID" value="NC_006932.1"/>
</dbReference>
<dbReference type="SMR" id="Q57DR5"/>
<dbReference type="EnsemblBacteria" id="AAX74219">
    <property type="protein sequence ID" value="AAX74219"/>
    <property type="gene ID" value="BruAb1_0853"/>
</dbReference>
<dbReference type="GeneID" id="93016778"/>
<dbReference type="KEGG" id="bmb:BruAb1_0853"/>
<dbReference type="HOGENOM" id="CLU_001031_3_1_5"/>
<dbReference type="UniPathway" id="UPA00074">
    <property type="reaction ID" value="UER00128"/>
</dbReference>
<dbReference type="Proteomes" id="UP000000540">
    <property type="component" value="Chromosome I"/>
</dbReference>
<dbReference type="GO" id="GO:0005737">
    <property type="term" value="C:cytoplasm"/>
    <property type="evidence" value="ECO:0007669"/>
    <property type="project" value="UniProtKB-SubCell"/>
</dbReference>
<dbReference type="GO" id="GO:0005524">
    <property type="term" value="F:ATP binding"/>
    <property type="evidence" value="ECO:0007669"/>
    <property type="project" value="UniProtKB-KW"/>
</dbReference>
<dbReference type="GO" id="GO:0004359">
    <property type="term" value="F:glutaminase activity"/>
    <property type="evidence" value="ECO:0007669"/>
    <property type="project" value="UniProtKB-EC"/>
</dbReference>
<dbReference type="GO" id="GO:0004642">
    <property type="term" value="F:phosphoribosylformylglycinamidine synthase activity"/>
    <property type="evidence" value="ECO:0007669"/>
    <property type="project" value="UniProtKB-UniRule"/>
</dbReference>
<dbReference type="GO" id="GO:0006189">
    <property type="term" value="P:'de novo' IMP biosynthetic process"/>
    <property type="evidence" value="ECO:0007669"/>
    <property type="project" value="UniProtKB-UniRule"/>
</dbReference>
<dbReference type="CDD" id="cd01740">
    <property type="entry name" value="GATase1_FGAR_AT"/>
    <property type="match status" value="1"/>
</dbReference>
<dbReference type="Gene3D" id="3.40.50.880">
    <property type="match status" value="1"/>
</dbReference>
<dbReference type="HAMAP" id="MF_00421">
    <property type="entry name" value="PurQ"/>
    <property type="match status" value="1"/>
</dbReference>
<dbReference type="InterPro" id="IPR029062">
    <property type="entry name" value="Class_I_gatase-like"/>
</dbReference>
<dbReference type="InterPro" id="IPR010075">
    <property type="entry name" value="PRibForGlyAmidine_synth_PurQ"/>
</dbReference>
<dbReference type="NCBIfam" id="TIGR01737">
    <property type="entry name" value="FGAM_synth_I"/>
    <property type="match status" value="1"/>
</dbReference>
<dbReference type="NCBIfam" id="NF002957">
    <property type="entry name" value="PRK03619.1"/>
    <property type="match status" value="1"/>
</dbReference>
<dbReference type="PANTHER" id="PTHR47552">
    <property type="entry name" value="PHOSPHORIBOSYLFORMYLGLYCINAMIDINE SYNTHASE SUBUNIT PURQ"/>
    <property type="match status" value="1"/>
</dbReference>
<dbReference type="PANTHER" id="PTHR47552:SF1">
    <property type="entry name" value="PHOSPHORIBOSYLFORMYLGLYCINAMIDINE SYNTHASE SUBUNIT PURQ"/>
    <property type="match status" value="1"/>
</dbReference>
<dbReference type="Pfam" id="PF13507">
    <property type="entry name" value="GATase_5"/>
    <property type="match status" value="1"/>
</dbReference>
<dbReference type="PIRSF" id="PIRSF001586">
    <property type="entry name" value="FGAM_synth_I"/>
    <property type="match status" value="1"/>
</dbReference>
<dbReference type="SMART" id="SM01211">
    <property type="entry name" value="GATase_5"/>
    <property type="match status" value="1"/>
</dbReference>
<dbReference type="SUPFAM" id="SSF52317">
    <property type="entry name" value="Class I glutamine amidotransferase-like"/>
    <property type="match status" value="1"/>
</dbReference>
<dbReference type="PROSITE" id="PS51273">
    <property type="entry name" value="GATASE_TYPE_1"/>
    <property type="match status" value="1"/>
</dbReference>
<gene>
    <name evidence="1" type="primary">purQ</name>
    <name type="ordered locus">BruAb1_0853</name>
</gene>
<sequence>MKSAVILLPGLNRNRDMIAALTKITGQAPVTVWQTDTSIPDDVDLILIPGGFSYGDYLRCGAIAARMPVMQAVREKADKGVMVMGVCNGFQILLEAGLLPGALMRNASLKFVCREVKLEVTNANTSFTRGYKPGQIIRCPVAHHDGNYFADAETLKRLEGEGQVVFRYAEGTNPNGSVNDIAGIVNARGNVLGMMPHPENLIEAAHGGDDGRALFAGALGITA</sequence>
<proteinExistence type="inferred from homology"/>
<organism>
    <name type="scientific">Brucella abortus biovar 1 (strain 9-941)</name>
    <dbReference type="NCBI Taxonomy" id="262698"/>
    <lineage>
        <taxon>Bacteria</taxon>
        <taxon>Pseudomonadati</taxon>
        <taxon>Pseudomonadota</taxon>
        <taxon>Alphaproteobacteria</taxon>
        <taxon>Hyphomicrobiales</taxon>
        <taxon>Brucellaceae</taxon>
        <taxon>Brucella/Ochrobactrum group</taxon>
        <taxon>Brucella</taxon>
    </lineage>
</organism>